<proteinExistence type="inferred from homology"/>
<feature type="chain" id="PRO_0000194229" description="Mannose-6-phosphate isomerase">
    <location>
        <begin position="1"/>
        <end position="316"/>
    </location>
</feature>
<feature type="active site" evidence="2">
    <location>
        <position position="191"/>
    </location>
</feature>
<feature type="binding site" evidence="1">
    <location>
        <position position="95"/>
    </location>
    <ligand>
        <name>Zn(2+)</name>
        <dbReference type="ChEBI" id="CHEBI:29105"/>
    </ligand>
</feature>
<feature type="binding site" evidence="3">
    <location>
        <position position="97"/>
    </location>
    <ligand>
        <name>Zn(2+)</name>
        <dbReference type="ChEBI" id="CHEBI:29105"/>
    </ligand>
</feature>
<feature type="binding site" evidence="3">
    <location>
        <position position="114"/>
    </location>
    <ligand>
        <name>Zn(2+)</name>
        <dbReference type="ChEBI" id="CHEBI:29105"/>
    </ligand>
</feature>
<feature type="binding site" evidence="3">
    <location>
        <position position="171"/>
    </location>
    <ligand>
        <name>Zn(2+)</name>
        <dbReference type="ChEBI" id="CHEBI:29105"/>
    </ligand>
</feature>
<feature type="sequence conflict" description="In Ref. 1; BAA04021." evidence="4" ref="1">
    <original>AE</original>
    <variation>EG</variation>
    <location>
        <begin position="2"/>
        <end position="3"/>
    </location>
</feature>
<feature type="sequence conflict" description="In Ref. 1; BAA04021." evidence="4" ref="1">
    <original>K</original>
    <variation>R</variation>
    <location>
        <position position="175"/>
    </location>
</feature>
<evidence type="ECO:0000250" key="1"/>
<evidence type="ECO:0000250" key="2">
    <source>
        <dbReference type="UniProtKB" id="P34948"/>
    </source>
</evidence>
<evidence type="ECO:0000250" key="3">
    <source>
        <dbReference type="UniProtKB" id="P39841"/>
    </source>
</evidence>
<evidence type="ECO:0000305" key="4"/>
<comment type="catalytic activity">
    <reaction>
        <text>D-mannose 6-phosphate = D-fructose 6-phosphate</text>
        <dbReference type="Rhea" id="RHEA:12356"/>
        <dbReference type="ChEBI" id="CHEBI:58735"/>
        <dbReference type="ChEBI" id="CHEBI:61527"/>
        <dbReference type="EC" id="5.3.1.8"/>
    </reaction>
</comment>
<comment type="cofactor">
    <cofactor evidence="1">
        <name>Zn(2+)</name>
        <dbReference type="ChEBI" id="CHEBI:29105"/>
    </cofactor>
    <text evidence="1">Binds 1 zinc ion per subunit.</text>
</comment>
<comment type="similarity">
    <text evidence="4">Belongs to the mannose-6-phosphate isomerase type 1 family.</text>
</comment>
<reference key="1">
    <citation type="journal article" date="1993" name="FEMS Microbiol. Lett.">
        <title>Isolation and sequence analysis of the pmi gene encoding phosphomannose isomerase of Streptococcus mutans.</title>
        <authorList>
            <person name="Sato Y."/>
            <person name="Yamamoto Y."/>
            <person name="Kizaki H."/>
            <person name="Kuramitsu H.K."/>
        </authorList>
    </citation>
    <scope>NUCLEOTIDE SEQUENCE [GENOMIC DNA]</scope>
    <source>
        <strain>GS-5</strain>
    </source>
</reference>
<reference key="2">
    <citation type="journal article" date="2002" name="Proc. Natl. Acad. Sci. U.S.A.">
        <title>Genome sequence of Streptococcus mutans UA159, a cariogenic dental pathogen.</title>
        <authorList>
            <person name="Ajdic D.J."/>
            <person name="McShan W.M."/>
            <person name="McLaughlin R.E."/>
            <person name="Savic G."/>
            <person name="Chang J."/>
            <person name="Carson M.B."/>
            <person name="Primeaux C."/>
            <person name="Tian R."/>
            <person name="Kenton S."/>
            <person name="Jia H.G."/>
            <person name="Lin S.P."/>
            <person name="Qian Y."/>
            <person name="Li S."/>
            <person name="Zhu H."/>
            <person name="Najar F.Z."/>
            <person name="Lai H."/>
            <person name="White J."/>
            <person name="Roe B.A."/>
            <person name="Ferretti J.J."/>
        </authorList>
    </citation>
    <scope>NUCLEOTIDE SEQUENCE [LARGE SCALE GENOMIC DNA]</scope>
    <source>
        <strain>ATCC 700610 / UA159</strain>
    </source>
</reference>
<dbReference type="EC" id="5.3.1.8"/>
<dbReference type="EMBL" id="D16594">
    <property type="protein sequence ID" value="BAA04021.1"/>
    <property type="molecule type" value="Genomic_DNA"/>
</dbReference>
<dbReference type="EMBL" id="AE014133">
    <property type="protein sequence ID" value="AAN59462.1"/>
    <property type="molecule type" value="Genomic_DNA"/>
</dbReference>
<dbReference type="RefSeq" id="NP_722156.1">
    <property type="nucleotide sequence ID" value="NC_004350.2"/>
</dbReference>
<dbReference type="RefSeq" id="WP_002262655.1">
    <property type="nucleotide sequence ID" value="NC_004350.2"/>
</dbReference>
<dbReference type="SMR" id="Q59935"/>
<dbReference type="STRING" id="210007.SMU_1839"/>
<dbReference type="KEGG" id="smu:SMU_1839"/>
<dbReference type="PATRIC" id="fig|210007.7.peg.1642"/>
<dbReference type="eggNOG" id="COG1482">
    <property type="taxonomic scope" value="Bacteria"/>
</dbReference>
<dbReference type="HOGENOM" id="CLU_020529_0_0_9"/>
<dbReference type="OrthoDB" id="9808275at2"/>
<dbReference type="PhylomeDB" id="Q59935"/>
<dbReference type="Proteomes" id="UP000002512">
    <property type="component" value="Chromosome"/>
</dbReference>
<dbReference type="GO" id="GO:0004476">
    <property type="term" value="F:mannose-6-phosphate isomerase activity"/>
    <property type="evidence" value="ECO:0007669"/>
    <property type="project" value="UniProtKB-EC"/>
</dbReference>
<dbReference type="GO" id="GO:0008270">
    <property type="term" value="F:zinc ion binding"/>
    <property type="evidence" value="ECO:0007669"/>
    <property type="project" value="InterPro"/>
</dbReference>
<dbReference type="GO" id="GO:0005975">
    <property type="term" value="P:carbohydrate metabolic process"/>
    <property type="evidence" value="ECO:0007669"/>
    <property type="project" value="InterPro"/>
</dbReference>
<dbReference type="CDD" id="cd07010">
    <property type="entry name" value="cupin_PMI_type_I_N_bac"/>
    <property type="match status" value="1"/>
</dbReference>
<dbReference type="FunFam" id="2.60.120.10:FF:000070">
    <property type="entry name" value="Mannose-6-phosphate isomerase"/>
    <property type="match status" value="1"/>
</dbReference>
<dbReference type="Gene3D" id="2.60.120.10">
    <property type="entry name" value="Jelly Rolls"/>
    <property type="match status" value="2"/>
</dbReference>
<dbReference type="InterPro" id="IPR051804">
    <property type="entry name" value="Carb_Metab_Reg_Kinase/Isom"/>
</dbReference>
<dbReference type="InterPro" id="IPR001250">
    <property type="entry name" value="Man6P_Isoase-1"/>
</dbReference>
<dbReference type="InterPro" id="IPR014628">
    <property type="entry name" value="Man6P_isomerase_Firm_short"/>
</dbReference>
<dbReference type="InterPro" id="IPR049071">
    <property type="entry name" value="MPI_cupin_dom"/>
</dbReference>
<dbReference type="InterPro" id="IPR046457">
    <property type="entry name" value="PMI_typeI_cat"/>
</dbReference>
<dbReference type="InterPro" id="IPR014710">
    <property type="entry name" value="RmlC-like_jellyroll"/>
</dbReference>
<dbReference type="InterPro" id="IPR011051">
    <property type="entry name" value="RmlC_Cupin_sf"/>
</dbReference>
<dbReference type="NCBIfam" id="TIGR00218">
    <property type="entry name" value="manA"/>
    <property type="match status" value="1"/>
</dbReference>
<dbReference type="PANTHER" id="PTHR42742:SF3">
    <property type="entry name" value="FRUCTOKINASE"/>
    <property type="match status" value="1"/>
</dbReference>
<dbReference type="PANTHER" id="PTHR42742">
    <property type="entry name" value="TRANSCRIPTIONAL REPRESSOR MPRA"/>
    <property type="match status" value="1"/>
</dbReference>
<dbReference type="Pfam" id="PF21621">
    <property type="entry name" value="MPI_cupin_dom"/>
    <property type="match status" value="1"/>
</dbReference>
<dbReference type="Pfam" id="PF20511">
    <property type="entry name" value="PMI_typeI_cat"/>
    <property type="match status" value="1"/>
</dbReference>
<dbReference type="PIRSF" id="PIRSF036894">
    <property type="entry name" value="PMI_Firm_short"/>
    <property type="match status" value="1"/>
</dbReference>
<dbReference type="SUPFAM" id="SSF51182">
    <property type="entry name" value="RmlC-like cupins"/>
    <property type="match status" value="1"/>
</dbReference>
<name>MANA_STRMU</name>
<protein>
    <recommendedName>
        <fullName>Mannose-6-phosphate isomerase</fullName>
        <ecNumber>5.3.1.8</ecNumber>
    </recommendedName>
    <alternativeName>
        <fullName>Phosphohexomutase</fullName>
    </alternativeName>
    <alternativeName>
        <fullName>Phosphomannose isomerase</fullName>
        <shortName>PMI</shortName>
    </alternativeName>
</protein>
<organism>
    <name type="scientific">Streptococcus mutans serotype c (strain ATCC 700610 / UA159)</name>
    <dbReference type="NCBI Taxonomy" id="210007"/>
    <lineage>
        <taxon>Bacteria</taxon>
        <taxon>Bacillati</taxon>
        <taxon>Bacillota</taxon>
        <taxon>Bacilli</taxon>
        <taxon>Lactobacillales</taxon>
        <taxon>Streptococcaceae</taxon>
        <taxon>Streptococcus</taxon>
    </lineage>
</organism>
<keyword id="KW-0413">Isomerase</keyword>
<keyword id="KW-0479">Metal-binding</keyword>
<keyword id="KW-1185">Reference proteome</keyword>
<keyword id="KW-0862">Zinc</keyword>
<sequence length="316" mass="35374">MAEPLFLQSQMHKKIWGGNRLRKEFGYDIPSETTGEYWAISAHPNGVSVVKNGVYKGVPLDELYAEHRELFGNSKSSVFPLLTKILDANDWLSVQVHPDNAYALEHEGELGKTECWYVISADEGAEIIYGHEAKSKEELRQMIAAGDWDHLLTKIPVKAGDFFYVPSGTMHAIGKGIMILETQQSSDTTYRVYDFDRKDDQGRKRALHIEQSIDVLTIGKPANATPAWLSLQGLETTVLVSSPFFTVYKWQISGSVKMQQTAPYLLVSVLAGQGRITVGLEQYALRKGDHLILPNTIKSWQFDGDLEIIASHSNEC</sequence>
<accession>Q59935</accession>
<gene>
    <name type="primary">pmi</name>
    <name type="synonym">manA</name>
    <name type="ordered locus">SMU_1839</name>
</gene>